<organism>
    <name type="scientific">Clostridium acetobutylicum (strain ATCC 824 / DSM 792 / JCM 1419 / IAM 19013 / LMG 5710 / NBRC 13948 / NRRL B-527 / VKM B-1787 / 2291 / W)</name>
    <dbReference type="NCBI Taxonomy" id="272562"/>
    <lineage>
        <taxon>Bacteria</taxon>
        <taxon>Bacillati</taxon>
        <taxon>Bacillota</taxon>
        <taxon>Clostridia</taxon>
        <taxon>Eubacteriales</taxon>
        <taxon>Clostridiaceae</taxon>
        <taxon>Clostridium</taxon>
    </lineage>
</organism>
<name>DPO4_CLOAB</name>
<feature type="chain" id="PRO_0000173909" description="DNA polymerase IV">
    <location>
        <begin position="1"/>
        <end position="396"/>
    </location>
</feature>
<feature type="domain" description="UmuC" evidence="1">
    <location>
        <begin position="5"/>
        <end position="192"/>
    </location>
</feature>
<feature type="active site" evidence="1">
    <location>
        <position position="112"/>
    </location>
</feature>
<feature type="binding site" evidence="1">
    <location>
        <position position="9"/>
    </location>
    <ligand>
        <name>Mg(2+)</name>
        <dbReference type="ChEBI" id="CHEBI:18420"/>
    </ligand>
</feature>
<feature type="binding site" evidence="1">
    <location>
        <position position="111"/>
    </location>
    <ligand>
        <name>Mg(2+)</name>
        <dbReference type="ChEBI" id="CHEBI:18420"/>
    </ligand>
</feature>
<feature type="site" description="Substrate discrimination" evidence="1">
    <location>
        <position position="14"/>
    </location>
</feature>
<dbReference type="EC" id="2.7.7.7" evidence="1"/>
<dbReference type="EMBL" id="AE001437">
    <property type="protein sequence ID" value="AAK78266.1"/>
    <property type="molecule type" value="Genomic_DNA"/>
</dbReference>
<dbReference type="PIR" id="G96934">
    <property type="entry name" value="G96934"/>
</dbReference>
<dbReference type="RefSeq" id="NP_346926.1">
    <property type="nucleotide sequence ID" value="NC_003030.1"/>
</dbReference>
<dbReference type="RefSeq" id="WP_010963608.1">
    <property type="nucleotide sequence ID" value="NC_003030.1"/>
</dbReference>
<dbReference type="SMR" id="Q97MB3"/>
<dbReference type="STRING" id="272562.CA_C0285"/>
<dbReference type="KEGG" id="cac:CA_C0285"/>
<dbReference type="PATRIC" id="fig|272562.8.peg.472"/>
<dbReference type="eggNOG" id="COG0389">
    <property type="taxonomic scope" value="Bacteria"/>
</dbReference>
<dbReference type="HOGENOM" id="CLU_012348_1_1_9"/>
<dbReference type="OrthoDB" id="9808813at2"/>
<dbReference type="Proteomes" id="UP000000814">
    <property type="component" value="Chromosome"/>
</dbReference>
<dbReference type="GO" id="GO:0005829">
    <property type="term" value="C:cytosol"/>
    <property type="evidence" value="ECO:0007669"/>
    <property type="project" value="TreeGrafter"/>
</dbReference>
<dbReference type="GO" id="GO:0003684">
    <property type="term" value="F:damaged DNA binding"/>
    <property type="evidence" value="ECO:0007669"/>
    <property type="project" value="InterPro"/>
</dbReference>
<dbReference type="GO" id="GO:0003887">
    <property type="term" value="F:DNA-directed DNA polymerase activity"/>
    <property type="evidence" value="ECO:0007669"/>
    <property type="project" value="UniProtKB-UniRule"/>
</dbReference>
<dbReference type="GO" id="GO:0000287">
    <property type="term" value="F:magnesium ion binding"/>
    <property type="evidence" value="ECO:0007669"/>
    <property type="project" value="UniProtKB-UniRule"/>
</dbReference>
<dbReference type="GO" id="GO:0006261">
    <property type="term" value="P:DNA-templated DNA replication"/>
    <property type="evidence" value="ECO:0007669"/>
    <property type="project" value="UniProtKB-UniRule"/>
</dbReference>
<dbReference type="GO" id="GO:0042276">
    <property type="term" value="P:error-prone translesion synthesis"/>
    <property type="evidence" value="ECO:0007669"/>
    <property type="project" value="TreeGrafter"/>
</dbReference>
<dbReference type="GO" id="GO:0009432">
    <property type="term" value="P:SOS response"/>
    <property type="evidence" value="ECO:0007669"/>
    <property type="project" value="TreeGrafter"/>
</dbReference>
<dbReference type="CDD" id="cd03586">
    <property type="entry name" value="PolY_Pol_IV_kappa"/>
    <property type="match status" value="1"/>
</dbReference>
<dbReference type="FunFam" id="3.30.1490.100:FF:000004">
    <property type="entry name" value="DNA polymerase IV"/>
    <property type="match status" value="1"/>
</dbReference>
<dbReference type="Gene3D" id="3.30.70.270">
    <property type="match status" value="1"/>
</dbReference>
<dbReference type="Gene3D" id="3.40.1170.60">
    <property type="match status" value="1"/>
</dbReference>
<dbReference type="Gene3D" id="1.10.150.20">
    <property type="entry name" value="5' to 3' exonuclease, C-terminal subdomain"/>
    <property type="match status" value="1"/>
</dbReference>
<dbReference type="Gene3D" id="3.30.1490.100">
    <property type="entry name" value="DNA polymerase, Y-family, little finger domain"/>
    <property type="match status" value="1"/>
</dbReference>
<dbReference type="HAMAP" id="MF_01113">
    <property type="entry name" value="DNApol_IV"/>
    <property type="match status" value="1"/>
</dbReference>
<dbReference type="InterPro" id="IPR043502">
    <property type="entry name" value="DNA/RNA_pol_sf"/>
</dbReference>
<dbReference type="InterPro" id="IPR036775">
    <property type="entry name" value="DNA_pol_Y-fam_lit_finger_sf"/>
</dbReference>
<dbReference type="InterPro" id="IPR017961">
    <property type="entry name" value="DNA_pol_Y-fam_little_finger"/>
</dbReference>
<dbReference type="InterPro" id="IPR050116">
    <property type="entry name" value="DNA_polymerase-Y"/>
</dbReference>
<dbReference type="InterPro" id="IPR022880">
    <property type="entry name" value="DNApol_IV"/>
</dbReference>
<dbReference type="InterPro" id="IPR053848">
    <property type="entry name" value="IMS_HHH_1"/>
</dbReference>
<dbReference type="InterPro" id="IPR043128">
    <property type="entry name" value="Rev_trsase/Diguanyl_cyclase"/>
</dbReference>
<dbReference type="InterPro" id="IPR001126">
    <property type="entry name" value="UmuC"/>
</dbReference>
<dbReference type="PANTHER" id="PTHR11076">
    <property type="entry name" value="DNA REPAIR POLYMERASE UMUC / TRANSFERASE FAMILY MEMBER"/>
    <property type="match status" value="1"/>
</dbReference>
<dbReference type="PANTHER" id="PTHR11076:SF35">
    <property type="entry name" value="DNA REPAIR PROTEIN HOMOLOG YOBH"/>
    <property type="match status" value="1"/>
</dbReference>
<dbReference type="Pfam" id="PF00817">
    <property type="entry name" value="IMS"/>
    <property type="match status" value="1"/>
</dbReference>
<dbReference type="Pfam" id="PF11799">
    <property type="entry name" value="IMS_C"/>
    <property type="match status" value="1"/>
</dbReference>
<dbReference type="Pfam" id="PF21999">
    <property type="entry name" value="IMS_HHH_1"/>
    <property type="match status" value="1"/>
</dbReference>
<dbReference type="SUPFAM" id="SSF56672">
    <property type="entry name" value="DNA/RNA polymerases"/>
    <property type="match status" value="1"/>
</dbReference>
<dbReference type="SUPFAM" id="SSF100879">
    <property type="entry name" value="Lesion bypass DNA polymerase (Y-family), little finger domain"/>
    <property type="match status" value="1"/>
</dbReference>
<dbReference type="PROSITE" id="PS50173">
    <property type="entry name" value="UMUC"/>
    <property type="match status" value="1"/>
</dbReference>
<accession>Q97MB3</accession>
<keyword id="KW-0963">Cytoplasm</keyword>
<keyword id="KW-0227">DNA damage</keyword>
<keyword id="KW-0234">DNA repair</keyword>
<keyword id="KW-0235">DNA replication</keyword>
<keyword id="KW-0238">DNA-binding</keyword>
<keyword id="KW-0239">DNA-directed DNA polymerase</keyword>
<keyword id="KW-0460">Magnesium</keyword>
<keyword id="KW-0479">Metal-binding</keyword>
<keyword id="KW-0515">Mutator protein</keyword>
<keyword id="KW-0548">Nucleotidyltransferase</keyword>
<keyword id="KW-1185">Reference proteome</keyword>
<keyword id="KW-0808">Transferase</keyword>
<comment type="function">
    <text evidence="1">Poorly processive, error-prone DNA polymerase involved in untargeted mutagenesis. Copies undamaged DNA at stalled replication forks, which arise in vivo from mismatched or misaligned primer ends. These misaligned primers can be extended by PolIV. Exhibits no 3'-5' exonuclease (proofreading) activity. May be involved in translesional synthesis, in conjunction with the beta clamp from PolIII.</text>
</comment>
<comment type="catalytic activity">
    <reaction evidence="1">
        <text>DNA(n) + a 2'-deoxyribonucleoside 5'-triphosphate = DNA(n+1) + diphosphate</text>
        <dbReference type="Rhea" id="RHEA:22508"/>
        <dbReference type="Rhea" id="RHEA-COMP:17339"/>
        <dbReference type="Rhea" id="RHEA-COMP:17340"/>
        <dbReference type="ChEBI" id="CHEBI:33019"/>
        <dbReference type="ChEBI" id="CHEBI:61560"/>
        <dbReference type="ChEBI" id="CHEBI:173112"/>
        <dbReference type="EC" id="2.7.7.7"/>
    </reaction>
</comment>
<comment type="cofactor">
    <cofactor evidence="1">
        <name>Mg(2+)</name>
        <dbReference type="ChEBI" id="CHEBI:18420"/>
    </cofactor>
    <text evidence="1">Binds 2 magnesium ions per subunit.</text>
</comment>
<comment type="subunit">
    <text evidence="1">Monomer.</text>
</comment>
<comment type="subcellular location">
    <subcellularLocation>
        <location evidence="1">Cytoplasm</location>
    </subcellularLocation>
</comment>
<comment type="similarity">
    <text evidence="1">Belongs to the DNA polymerase type-Y family.</text>
</comment>
<protein>
    <recommendedName>
        <fullName evidence="1">DNA polymerase IV</fullName>
        <shortName evidence="1">Pol IV</shortName>
        <ecNumber evidence="1">2.7.7.7</ecNumber>
    </recommendedName>
</protein>
<evidence type="ECO:0000255" key="1">
    <source>
        <dbReference type="HAMAP-Rule" id="MF_01113"/>
    </source>
</evidence>
<proteinExistence type="inferred from homology"/>
<gene>
    <name evidence="1" type="primary">dinB</name>
    <name type="ordered locus">CA_C0285</name>
</gene>
<sequence length="396" mass="45363">MSKVIFHVDVNSAFLSWTAVEKLKNGEDIDIRKVPSVIGGDEKSRHGVVLAKSTPAKKYGIVTGESLYHARKKCPNILVFPPRFDTYRKASESMMNLLKRFTPHIEKYSIDECFMDVTNDLRGMESVEFASIIKERIKNELGFTVNVGISTNRLLAKMASELNKPDKINTLYKHEIKDKMWPLPVGELFMVGKSMKRKLNELHIKTIGELAKYDVNILKAKFKSHGNMVWEYANGIDNSDISRYRDEIKCISNETTLSMDLTDTEKIHKILVTLCENLGQRLRDANKYCTSISVNIRTSDFRNYSHQKKLKNAVSSTRDIILYADKIFNEMWGREPIRLLGVQLSGLCSGSSVQISMFDEKTDTRNEILDKTLDSIRKKYGDNVIMRSVLLEKEEK</sequence>
<reference key="1">
    <citation type="journal article" date="2001" name="J. Bacteriol.">
        <title>Genome sequence and comparative analysis of the solvent-producing bacterium Clostridium acetobutylicum.</title>
        <authorList>
            <person name="Noelling J."/>
            <person name="Breton G."/>
            <person name="Omelchenko M.V."/>
            <person name="Makarova K.S."/>
            <person name="Zeng Q."/>
            <person name="Gibson R."/>
            <person name="Lee H.M."/>
            <person name="Dubois J."/>
            <person name="Qiu D."/>
            <person name="Hitti J."/>
            <person name="Wolf Y.I."/>
            <person name="Tatusov R.L."/>
            <person name="Sabathe F."/>
            <person name="Doucette-Stamm L.A."/>
            <person name="Soucaille P."/>
            <person name="Daly M.J."/>
            <person name="Bennett G.N."/>
            <person name="Koonin E.V."/>
            <person name="Smith D.R."/>
        </authorList>
    </citation>
    <scope>NUCLEOTIDE SEQUENCE [LARGE SCALE GENOMIC DNA]</scope>
    <source>
        <strain>ATCC 824 / DSM 792 / JCM 1419 / IAM 19013 / LMG 5710 / NBRC 13948 / NRRL B-527 / VKM B-1787 / 2291 / W</strain>
    </source>
</reference>